<protein>
    <recommendedName>
        <fullName evidence="1">Methionyl-tRNA formyltransferase</fullName>
        <ecNumber evidence="1">2.1.2.9</ecNumber>
    </recommendedName>
</protein>
<keyword id="KW-0648">Protein biosynthesis</keyword>
<keyword id="KW-1185">Reference proteome</keyword>
<keyword id="KW-0808">Transferase</keyword>
<organism>
    <name type="scientific">Treponema denticola (strain ATCC 35405 / DSM 14222 / CIP 103919 / JCM 8153 / KCTC 15104)</name>
    <dbReference type="NCBI Taxonomy" id="243275"/>
    <lineage>
        <taxon>Bacteria</taxon>
        <taxon>Pseudomonadati</taxon>
        <taxon>Spirochaetota</taxon>
        <taxon>Spirochaetia</taxon>
        <taxon>Spirochaetales</taxon>
        <taxon>Treponemataceae</taxon>
        <taxon>Treponema</taxon>
    </lineage>
</organism>
<feature type="chain" id="PRO_0000083076" description="Methionyl-tRNA formyltransferase">
    <location>
        <begin position="1"/>
        <end position="322"/>
    </location>
</feature>
<feature type="binding site" evidence="1">
    <location>
        <begin position="115"/>
        <end position="118"/>
    </location>
    <ligand>
        <name>(6S)-5,6,7,8-tetrahydrofolate</name>
        <dbReference type="ChEBI" id="CHEBI:57453"/>
    </ligand>
</feature>
<dbReference type="EC" id="2.1.2.9" evidence="1"/>
<dbReference type="EMBL" id="AE017226">
    <property type="protein sequence ID" value="AAS12161.1"/>
    <property type="molecule type" value="Genomic_DNA"/>
</dbReference>
<dbReference type="RefSeq" id="NP_972250.1">
    <property type="nucleotide sequence ID" value="NC_002967.9"/>
</dbReference>
<dbReference type="RefSeq" id="WP_002679327.1">
    <property type="nucleotide sequence ID" value="NC_002967.9"/>
</dbReference>
<dbReference type="SMR" id="Q73M65"/>
<dbReference type="STRING" id="243275.TDE_1644"/>
<dbReference type="PaxDb" id="243275-TDE_1644"/>
<dbReference type="GeneID" id="2739753"/>
<dbReference type="KEGG" id="tde:TDE_1644"/>
<dbReference type="PATRIC" id="fig|243275.7.peg.1572"/>
<dbReference type="eggNOG" id="COG0223">
    <property type="taxonomic scope" value="Bacteria"/>
</dbReference>
<dbReference type="HOGENOM" id="CLU_033347_1_1_12"/>
<dbReference type="OrthoDB" id="9802815at2"/>
<dbReference type="Proteomes" id="UP000008212">
    <property type="component" value="Chromosome"/>
</dbReference>
<dbReference type="GO" id="GO:0005829">
    <property type="term" value="C:cytosol"/>
    <property type="evidence" value="ECO:0007669"/>
    <property type="project" value="TreeGrafter"/>
</dbReference>
<dbReference type="GO" id="GO:0004479">
    <property type="term" value="F:methionyl-tRNA formyltransferase activity"/>
    <property type="evidence" value="ECO:0007669"/>
    <property type="project" value="UniProtKB-UniRule"/>
</dbReference>
<dbReference type="CDD" id="cd08646">
    <property type="entry name" value="FMT_core_Met-tRNA-FMT_N"/>
    <property type="match status" value="1"/>
</dbReference>
<dbReference type="CDD" id="cd08704">
    <property type="entry name" value="Met_tRNA_FMT_C"/>
    <property type="match status" value="1"/>
</dbReference>
<dbReference type="Gene3D" id="3.10.25.10">
    <property type="entry name" value="Formyl transferase, C-terminal domain"/>
    <property type="match status" value="1"/>
</dbReference>
<dbReference type="Gene3D" id="3.40.50.170">
    <property type="entry name" value="Formyl transferase, N-terminal domain"/>
    <property type="match status" value="1"/>
</dbReference>
<dbReference type="HAMAP" id="MF_00182">
    <property type="entry name" value="Formyl_trans"/>
    <property type="match status" value="1"/>
</dbReference>
<dbReference type="InterPro" id="IPR005794">
    <property type="entry name" value="Fmt"/>
</dbReference>
<dbReference type="InterPro" id="IPR005793">
    <property type="entry name" value="Formyl_trans_C"/>
</dbReference>
<dbReference type="InterPro" id="IPR037022">
    <property type="entry name" value="Formyl_trans_C_sf"/>
</dbReference>
<dbReference type="InterPro" id="IPR002376">
    <property type="entry name" value="Formyl_transf_N"/>
</dbReference>
<dbReference type="InterPro" id="IPR036477">
    <property type="entry name" value="Formyl_transf_N_sf"/>
</dbReference>
<dbReference type="InterPro" id="IPR011034">
    <property type="entry name" value="Formyl_transferase-like_C_sf"/>
</dbReference>
<dbReference type="InterPro" id="IPR044135">
    <property type="entry name" value="Met-tRNA-FMT_C"/>
</dbReference>
<dbReference type="InterPro" id="IPR041711">
    <property type="entry name" value="Met-tRNA-FMT_N"/>
</dbReference>
<dbReference type="NCBIfam" id="TIGR00460">
    <property type="entry name" value="fmt"/>
    <property type="match status" value="1"/>
</dbReference>
<dbReference type="PANTHER" id="PTHR11138">
    <property type="entry name" value="METHIONYL-TRNA FORMYLTRANSFERASE"/>
    <property type="match status" value="1"/>
</dbReference>
<dbReference type="PANTHER" id="PTHR11138:SF5">
    <property type="entry name" value="METHIONYL-TRNA FORMYLTRANSFERASE, MITOCHONDRIAL"/>
    <property type="match status" value="1"/>
</dbReference>
<dbReference type="Pfam" id="PF02911">
    <property type="entry name" value="Formyl_trans_C"/>
    <property type="match status" value="1"/>
</dbReference>
<dbReference type="Pfam" id="PF00551">
    <property type="entry name" value="Formyl_trans_N"/>
    <property type="match status" value="1"/>
</dbReference>
<dbReference type="SUPFAM" id="SSF50486">
    <property type="entry name" value="FMT C-terminal domain-like"/>
    <property type="match status" value="1"/>
</dbReference>
<dbReference type="SUPFAM" id="SSF53328">
    <property type="entry name" value="Formyltransferase"/>
    <property type="match status" value="1"/>
</dbReference>
<reference key="1">
    <citation type="journal article" date="2004" name="Proc. Natl. Acad. Sci. U.S.A.">
        <title>Comparison of the genome of the oral pathogen Treponema denticola with other spirochete genomes.</title>
        <authorList>
            <person name="Seshadri R."/>
            <person name="Myers G.S.A."/>
            <person name="Tettelin H."/>
            <person name="Eisen J.A."/>
            <person name="Heidelberg J.F."/>
            <person name="Dodson R.J."/>
            <person name="Davidsen T.M."/>
            <person name="DeBoy R.T."/>
            <person name="Fouts D.E."/>
            <person name="Haft D.H."/>
            <person name="Selengut J."/>
            <person name="Ren Q."/>
            <person name="Brinkac L.M."/>
            <person name="Madupu R."/>
            <person name="Kolonay J.F."/>
            <person name="Durkin S.A."/>
            <person name="Daugherty S.C."/>
            <person name="Shetty J."/>
            <person name="Shvartsbeyn A."/>
            <person name="Gebregeorgis E."/>
            <person name="Geer K."/>
            <person name="Tsegaye G."/>
            <person name="Malek J.A."/>
            <person name="Ayodeji B."/>
            <person name="Shatsman S."/>
            <person name="McLeod M.P."/>
            <person name="Smajs D."/>
            <person name="Howell J.K."/>
            <person name="Pal S."/>
            <person name="Amin A."/>
            <person name="Vashisth P."/>
            <person name="McNeill T.Z."/>
            <person name="Xiang Q."/>
            <person name="Sodergren E."/>
            <person name="Baca E."/>
            <person name="Weinstock G.M."/>
            <person name="Norris S.J."/>
            <person name="Fraser C.M."/>
            <person name="Paulsen I.T."/>
        </authorList>
    </citation>
    <scope>NUCLEOTIDE SEQUENCE [LARGE SCALE GENOMIC DNA]</scope>
    <source>
        <strain>ATCC 35405 / DSM 14222 / CIP 103919 / JCM 8153 / KCTC 15104</strain>
    </source>
</reference>
<proteinExistence type="inferred from homology"/>
<name>FMT_TREDE</name>
<comment type="function">
    <text evidence="1">Attaches a formyl group to the free amino group of methionyl-tRNA(fMet). The formyl group appears to play a dual role in the initiator identity of N-formylmethionyl-tRNA by promoting its recognition by IF2 and preventing the misappropriation of this tRNA by the elongation apparatus.</text>
</comment>
<comment type="catalytic activity">
    <reaction evidence="1">
        <text>L-methionyl-tRNA(fMet) + (6R)-10-formyltetrahydrofolate = N-formyl-L-methionyl-tRNA(fMet) + (6S)-5,6,7,8-tetrahydrofolate + H(+)</text>
        <dbReference type="Rhea" id="RHEA:24380"/>
        <dbReference type="Rhea" id="RHEA-COMP:9952"/>
        <dbReference type="Rhea" id="RHEA-COMP:9953"/>
        <dbReference type="ChEBI" id="CHEBI:15378"/>
        <dbReference type="ChEBI" id="CHEBI:57453"/>
        <dbReference type="ChEBI" id="CHEBI:78530"/>
        <dbReference type="ChEBI" id="CHEBI:78844"/>
        <dbReference type="ChEBI" id="CHEBI:195366"/>
        <dbReference type="EC" id="2.1.2.9"/>
    </reaction>
</comment>
<comment type="similarity">
    <text evidence="1">Belongs to the Fmt family.</text>
</comment>
<evidence type="ECO:0000255" key="1">
    <source>
        <dbReference type="HAMAP-Rule" id="MF_00182"/>
    </source>
</evidence>
<accession>Q73M65</accession>
<sequence>MRILFAGTPSCAVPALNLIAREFDLCGVLTNPPAPAGRNKKMQDSDTALAVKELIKEGVLPENFPILTPQKLDDNYRKELEALKSELLVCFAYGKIFGPKTMALFPLGGINIHPSLLPRWRGPAPVPAAILAGDKLTGITIQTLAQKTDCGSILGQLEIPLNDSETTESLLADCADKCCPLLRDVLSDFENKLKQARPQEEAKALYCSMLKKEDGLIDWSKPAEEIERKIRAFTPWPGCFTFKNSEKISIIEANLYEDASNEMTKNKKFGTILGTDKKCGILIQTGNGILAVSVLQKQAKKKLEWKDFLNGSPDFLEGGFET</sequence>
<gene>
    <name evidence="1" type="primary">fmt</name>
    <name type="ordered locus">TDE_1644</name>
</gene>